<organism>
    <name type="scientific">Clavibacter sepedonicus</name>
    <name type="common">Clavibacter michiganensis subsp. sepedonicus</name>
    <dbReference type="NCBI Taxonomy" id="31964"/>
    <lineage>
        <taxon>Bacteria</taxon>
        <taxon>Bacillati</taxon>
        <taxon>Actinomycetota</taxon>
        <taxon>Actinomycetes</taxon>
        <taxon>Micrococcales</taxon>
        <taxon>Microbacteriaceae</taxon>
        <taxon>Clavibacter</taxon>
    </lineage>
</organism>
<evidence type="ECO:0000255" key="1">
    <source>
        <dbReference type="HAMAP-Rule" id="MF_01615"/>
    </source>
</evidence>
<proteinExistence type="inferred from homology"/>
<feature type="chain" id="PRO_0000335569" description="Pyridoxal 5'-phosphate synthase subunit PdxT">
    <location>
        <begin position="1"/>
        <end position="209"/>
    </location>
</feature>
<feature type="active site" description="Nucleophile" evidence="1">
    <location>
        <position position="90"/>
    </location>
</feature>
<feature type="active site" description="Charge relay system" evidence="1">
    <location>
        <position position="185"/>
    </location>
</feature>
<feature type="active site" description="Charge relay system" evidence="1">
    <location>
        <position position="187"/>
    </location>
</feature>
<feature type="binding site" evidence="1">
    <location>
        <begin position="58"/>
        <end position="60"/>
    </location>
    <ligand>
        <name>L-glutamine</name>
        <dbReference type="ChEBI" id="CHEBI:58359"/>
    </ligand>
</feature>
<feature type="binding site" evidence="1">
    <location>
        <position position="119"/>
    </location>
    <ligand>
        <name>L-glutamine</name>
        <dbReference type="ChEBI" id="CHEBI:58359"/>
    </ligand>
</feature>
<feature type="binding site" evidence="1">
    <location>
        <begin position="148"/>
        <end position="149"/>
    </location>
    <ligand>
        <name>L-glutamine</name>
        <dbReference type="ChEBI" id="CHEBI:58359"/>
    </ligand>
</feature>
<reference key="1">
    <citation type="journal article" date="2008" name="J. Bacteriol.">
        <title>Genome of the actinomycete plant pathogen Clavibacter michiganensis subsp. sepedonicus suggests recent niche adaptation.</title>
        <authorList>
            <person name="Bentley S.D."/>
            <person name="Corton C."/>
            <person name="Brown S.E."/>
            <person name="Barron A."/>
            <person name="Clark L."/>
            <person name="Doggett J."/>
            <person name="Harris B."/>
            <person name="Ormond D."/>
            <person name="Quail M.A."/>
            <person name="May G."/>
            <person name="Francis D."/>
            <person name="Knudson D."/>
            <person name="Parkhill J."/>
            <person name="Ishimaru C.A."/>
        </authorList>
    </citation>
    <scope>NUCLEOTIDE SEQUENCE [LARGE SCALE GENOMIC DNA]</scope>
    <source>
        <strain>ATCC 33113 / DSM 20744 / JCM 9667 / LMG 2889 / ICMP 2535 / C-1</strain>
    </source>
</reference>
<name>PDXT_CLASE</name>
<gene>
    <name evidence="1" type="primary">pdxT</name>
    <name type="ordered locus">CMS0714</name>
</gene>
<comment type="function">
    <text evidence="1">Catalyzes the hydrolysis of glutamine to glutamate and ammonia as part of the biosynthesis of pyridoxal 5'-phosphate. The resulting ammonia molecule is channeled to the active site of PdxS.</text>
</comment>
<comment type="catalytic activity">
    <reaction evidence="1">
        <text>aldehydo-D-ribose 5-phosphate + D-glyceraldehyde 3-phosphate + L-glutamine = pyridoxal 5'-phosphate + L-glutamate + phosphate + 3 H2O + H(+)</text>
        <dbReference type="Rhea" id="RHEA:31507"/>
        <dbReference type="ChEBI" id="CHEBI:15377"/>
        <dbReference type="ChEBI" id="CHEBI:15378"/>
        <dbReference type="ChEBI" id="CHEBI:29985"/>
        <dbReference type="ChEBI" id="CHEBI:43474"/>
        <dbReference type="ChEBI" id="CHEBI:58273"/>
        <dbReference type="ChEBI" id="CHEBI:58359"/>
        <dbReference type="ChEBI" id="CHEBI:59776"/>
        <dbReference type="ChEBI" id="CHEBI:597326"/>
        <dbReference type="EC" id="4.3.3.6"/>
    </reaction>
</comment>
<comment type="catalytic activity">
    <reaction evidence="1">
        <text>L-glutamine + H2O = L-glutamate + NH4(+)</text>
        <dbReference type="Rhea" id="RHEA:15889"/>
        <dbReference type="ChEBI" id="CHEBI:15377"/>
        <dbReference type="ChEBI" id="CHEBI:28938"/>
        <dbReference type="ChEBI" id="CHEBI:29985"/>
        <dbReference type="ChEBI" id="CHEBI:58359"/>
        <dbReference type="EC" id="3.5.1.2"/>
    </reaction>
</comment>
<comment type="pathway">
    <text evidence="1">Cofactor biosynthesis; pyridoxal 5'-phosphate biosynthesis.</text>
</comment>
<comment type="subunit">
    <text evidence="1">In the presence of PdxS, forms a dodecamer of heterodimers. Only shows activity in the heterodimer.</text>
</comment>
<comment type="similarity">
    <text evidence="1">Belongs to the glutaminase PdxT/SNO family.</text>
</comment>
<accession>B0REB6</accession>
<protein>
    <recommendedName>
        <fullName evidence="1">Pyridoxal 5'-phosphate synthase subunit PdxT</fullName>
        <ecNumber evidence="1">4.3.3.6</ecNumber>
    </recommendedName>
    <alternativeName>
        <fullName evidence="1">Pdx2</fullName>
    </alternativeName>
    <alternativeName>
        <fullName evidence="1">Pyridoxal 5'-phosphate synthase glutaminase subunit</fullName>
        <ecNumber evidence="1">3.5.1.2</ecNumber>
    </alternativeName>
</protein>
<sequence length="209" mass="21753">MAGSTPAPHGDGPLVGVLALQGDVREHVRVLEGFGARTRLVRQPKDLPGISGLVIPGGESTVMDKLSRQFGIAEPLRAAIDDGLPVYGTCAGLIMLADEIVDAIHDQRGIGGLDVSVRRNAFGSQTASFEVDLDVPALGAPPVHAVFIRAPVVASVGPAASALASLDDGRVVAVRQGALLGTSFHPEVTGDLRFHRLFLDMVEDAGRTL</sequence>
<dbReference type="EC" id="4.3.3.6" evidence="1"/>
<dbReference type="EC" id="3.5.1.2" evidence="1"/>
<dbReference type="EMBL" id="AM849034">
    <property type="protein sequence ID" value="CAQ00834.1"/>
    <property type="molecule type" value="Genomic_DNA"/>
</dbReference>
<dbReference type="RefSeq" id="WP_012298143.1">
    <property type="nucleotide sequence ID" value="NZ_MZMN01000003.1"/>
</dbReference>
<dbReference type="SMR" id="B0REB6"/>
<dbReference type="STRING" id="31964.CMS0714"/>
<dbReference type="MEROPS" id="C26.A32"/>
<dbReference type="KEGG" id="cms:CMS0714"/>
<dbReference type="eggNOG" id="COG0311">
    <property type="taxonomic scope" value="Bacteria"/>
</dbReference>
<dbReference type="HOGENOM" id="CLU_069674_2_0_11"/>
<dbReference type="OrthoDB" id="9810320at2"/>
<dbReference type="UniPathway" id="UPA00245"/>
<dbReference type="Proteomes" id="UP000001318">
    <property type="component" value="Chromosome"/>
</dbReference>
<dbReference type="GO" id="GO:0005829">
    <property type="term" value="C:cytosol"/>
    <property type="evidence" value="ECO:0007669"/>
    <property type="project" value="TreeGrafter"/>
</dbReference>
<dbReference type="GO" id="GO:1903600">
    <property type="term" value="C:glutaminase complex"/>
    <property type="evidence" value="ECO:0007669"/>
    <property type="project" value="TreeGrafter"/>
</dbReference>
<dbReference type="GO" id="GO:0004359">
    <property type="term" value="F:glutaminase activity"/>
    <property type="evidence" value="ECO:0007669"/>
    <property type="project" value="UniProtKB-UniRule"/>
</dbReference>
<dbReference type="GO" id="GO:0036381">
    <property type="term" value="F:pyridoxal 5'-phosphate synthase (glutamine hydrolysing) activity"/>
    <property type="evidence" value="ECO:0007669"/>
    <property type="project" value="UniProtKB-UniRule"/>
</dbReference>
<dbReference type="GO" id="GO:0006543">
    <property type="term" value="P:glutamine catabolic process"/>
    <property type="evidence" value="ECO:0007669"/>
    <property type="project" value="UniProtKB-UniRule"/>
</dbReference>
<dbReference type="GO" id="GO:0042823">
    <property type="term" value="P:pyridoxal phosphate biosynthetic process"/>
    <property type="evidence" value="ECO:0007669"/>
    <property type="project" value="UniProtKB-UniRule"/>
</dbReference>
<dbReference type="GO" id="GO:0008614">
    <property type="term" value="P:pyridoxine metabolic process"/>
    <property type="evidence" value="ECO:0007669"/>
    <property type="project" value="TreeGrafter"/>
</dbReference>
<dbReference type="CDD" id="cd01749">
    <property type="entry name" value="GATase1_PB"/>
    <property type="match status" value="1"/>
</dbReference>
<dbReference type="FunFam" id="3.40.50.880:FF:000010">
    <property type="entry name" value="uncharacterized protein LOC100176842 isoform X2"/>
    <property type="match status" value="1"/>
</dbReference>
<dbReference type="Gene3D" id="3.40.50.880">
    <property type="match status" value="1"/>
</dbReference>
<dbReference type="HAMAP" id="MF_01615">
    <property type="entry name" value="PdxT"/>
    <property type="match status" value="1"/>
</dbReference>
<dbReference type="InterPro" id="IPR029062">
    <property type="entry name" value="Class_I_gatase-like"/>
</dbReference>
<dbReference type="InterPro" id="IPR002161">
    <property type="entry name" value="PdxT/SNO"/>
</dbReference>
<dbReference type="InterPro" id="IPR021196">
    <property type="entry name" value="PdxT/SNO_CS"/>
</dbReference>
<dbReference type="NCBIfam" id="TIGR03800">
    <property type="entry name" value="PLP_synth_Pdx2"/>
    <property type="match status" value="1"/>
</dbReference>
<dbReference type="PANTHER" id="PTHR31559">
    <property type="entry name" value="PYRIDOXAL 5'-PHOSPHATE SYNTHASE SUBUNIT SNO"/>
    <property type="match status" value="1"/>
</dbReference>
<dbReference type="PANTHER" id="PTHR31559:SF0">
    <property type="entry name" value="PYRIDOXAL 5'-PHOSPHATE SYNTHASE SUBUNIT SNO1-RELATED"/>
    <property type="match status" value="1"/>
</dbReference>
<dbReference type="Pfam" id="PF01174">
    <property type="entry name" value="SNO"/>
    <property type="match status" value="1"/>
</dbReference>
<dbReference type="PIRSF" id="PIRSF005639">
    <property type="entry name" value="Glut_amidoT_SNO"/>
    <property type="match status" value="1"/>
</dbReference>
<dbReference type="SUPFAM" id="SSF52317">
    <property type="entry name" value="Class I glutamine amidotransferase-like"/>
    <property type="match status" value="1"/>
</dbReference>
<dbReference type="PROSITE" id="PS01236">
    <property type="entry name" value="PDXT_SNO_1"/>
    <property type="match status" value="1"/>
</dbReference>
<dbReference type="PROSITE" id="PS51130">
    <property type="entry name" value="PDXT_SNO_2"/>
    <property type="match status" value="1"/>
</dbReference>
<keyword id="KW-0315">Glutamine amidotransferase</keyword>
<keyword id="KW-0378">Hydrolase</keyword>
<keyword id="KW-0456">Lyase</keyword>
<keyword id="KW-0663">Pyridoxal phosphate</keyword>